<accession>Q4U2R1</accession>
<accession>E9PZT6</accession>
<accession>O88473</accession>
<accession>Q3TRJ8</accession>
<accession>Q3TS47</accession>
<accession>Q3TST2</accession>
<accession>Q3UFQ6</accession>
<accession>Q3URH7</accession>
<accession>Q5DU32</accession>
<accession>Q7TPR5</accession>
<accession>Q80VV7</accession>
<accession>Q9QYT1</accession>
<accession>Q9Z168</accession>
<accession>Q9Z171</accession>
<proteinExistence type="evidence at protein level"/>
<name>HERC2_MOUSE</name>
<reference key="1">
    <citation type="journal article" date="1998" name="Proc. Natl. Acad. Sci. U.S.A.">
        <title>A very large novel protein with diverse functional motifs is deficient in rjs (runty, jerky, sterile) mice.</title>
        <authorList>
            <person name="Lehman A.L."/>
            <person name="Nakatsu Y."/>
            <person name="Ching A."/>
            <person name="Bronson R.T."/>
            <person name="Oakey R.J."/>
            <person name="Keiper-Hyrnko N."/>
            <person name="Finger J.N."/>
            <person name="Durham-Pierre D."/>
            <person name="Horton D.B."/>
            <person name="Newton J.M."/>
            <person name="Lyon M.F."/>
            <person name="Brilliant M.H."/>
        </authorList>
    </citation>
    <scope>NUCLEOTIDE SEQUENCE [MRNA] (ISOFORM 1)</scope>
    <scope>TISSUE SPECIFICITY</scope>
    <scope>DISEASE</scope>
    <source>
        <strain evidence="15">C57BL/6J</strain>
    </source>
</reference>
<reference key="2">
    <citation type="journal article" date="1999" name="Hum. Mol. Genet.">
        <title>The ancestral gene for transcribed, low-copy repeats in the Prader-Willi/Angelman region encodes a large protein implicated in protein trafficking, which is deficient in mice with neuromuscular and spermiogenic abnormalities.</title>
        <authorList>
            <person name="Ji Y."/>
            <person name="Walkowicz M.J."/>
            <person name="Buiting K."/>
            <person name="Johnson D.K."/>
            <person name="Tarvin R.E."/>
            <person name="Rinchik E.M."/>
            <person name="Horsthemke B."/>
            <person name="Stubbs L."/>
            <person name="Nicholls R.D."/>
        </authorList>
    </citation>
    <scope>NUCLEOTIDE SEQUENCE [MRNA] (ISOFORM 1)</scope>
    <scope>DISEASE</scope>
</reference>
<reference key="3">
    <citation type="journal article" date="2009" name="PLoS Biol.">
        <title>Lineage-specific biology revealed by a finished genome assembly of the mouse.</title>
        <authorList>
            <person name="Church D.M."/>
            <person name="Goodstadt L."/>
            <person name="Hillier L.W."/>
            <person name="Zody M.C."/>
            <person name="Goldstein S."/>
            <person name="She X."/>
            <person name="Bult C.J."/>
            <person name="Agarwala R."/>
            <person name="Cherry J.L."/>
            <person name="DiCuccio M."/>
            <person name="Hlavina W."/>
            <person name="Kapustin Y."/>
            <person name="Meric P."/>
            <person name="Maglott D."/>
            <person name="Birtle Z."/>
            <person name="Marques A.C."/>
            <person name="Graves T."/>
            <person name="Zhou S."/>
            <person name="Teague B."/>
            <person name="Potamousis K."/>
            <person name="Churas C."/>
            <person name="Place M."/>
            <person name="Herschleb J."/>
            <person name="Runnheim R."/>
            <person name="Forrest D."/>
            <person name="Amos-Landgraf J."/>
            <person name="Schwartz D.C."/>
            <person name="Cheng Z."/>
            <person name="Lindblad-Toh K."/>
            <person name="Eichler E.E."/>
            <person name="Ponting C.P."/>
        </authorList>
    </citation>
    <scope>NUCLEOTIDE SEQUENCE [LARGE SCALE GENOMIC DNA]</scope>
    <source>
        <strain>C57BL/6J</strain>
    </source>
</reference>
<reference key="4">
    <citation type="journal article" date="2005" name="Science">
        <title>The transcriptional landscape of the mammalian genome.</title>
        <authorList>
            <person name="Carninci P."/>
            <person name="Kasukawa T."/>
            <person name="Katayama S."/>
            <person name="Gough J."/>
            <person name="Frith M.C."/>
            <person name="Maeda N."/>
            <person name="Oyama R."/>
            <person name="Ravasi T."/>
            <person name="Lenhard B."/>
            <person name="Wells C."/>
            <person name="Kodzius R."/>
            <person name="Shimokawa K."/>
            <person name="Bajic V.B."/>
            <person name="Brenner S.E."/>
            <person name="Batalov S."/>
            <person name="Forrest A.R."/>
            <person name="Zavolan M."/>
            <person name="Davis M.J."/>
            <person name="Wilming L.G."/>
            <person name="Aidinis V."/>
            <person name="Allen J.E."/>
            <person name="Ambesi-Impiombato A."/>
            <person name="Apweiler R."/>
            <person name="Aturaliya R.N."/>
            <person name="Bailey T.L."/>
            <person name="Bansal M."/>
            <person name="Baxter L."/>
            <person name="Beisel K.W."/>
            <person name="Bersano T."/>
            <person name="Bono H."/>
            <person name="Chalk A.M."/>
            <person name="Chiu K.P."/>
            <person name="Choudhary V."/>
            <person name="Christoffels A."/>
            <person name="Clutterbuck D.R."/>
            <person name="Crowe M.L."/>
            <person name="Dalla E."/>
            <person name="Dalrymple B.P."/>
            <person name="de Bono B."/>
            <person name="Della Gatta G."/>
            <person name="di Bernardo D."/>
            <person name="Down T."/>
            <person name="Engstrom P."/>
            <person name="Fagiolini M."/>
            <person name="Faulkner G."/>
            <person name="Fletcher C.F."/>
            <person name="Fukushima T."/>
            <person name="Furuno M."/>
            <person name="Futaki S."/>
            <person name="Gariboldi M."/>
            <person name="Georgii-Hemming P."/>
            <person name="Gingeras T.R."/>
            <person name="Gojobori T."/>
            <person name="Green R.E."/>
            <person name="Gustincich S."/>
            <person name="Harbers M."/>
            <person name="Hayashi Y."/>
            <person name="Hensch T.K."/>
            <person name="Hirokawa N."/>
            <person name="Hill D."/>
            <person name="Huminiecki L."/>
            <person name="Iacono M."/>
            <person name="Ikeo K."/>
            <person name="Iwama A."/>
            <person name="Ishikawa T."/>
            <person name="Jakt M."/>
            <person name="Kanapin A."/>
            <person name="Katoh M."/>
            <person name="Kawasawa Y."/>
            <person name="Kelso J."/>
            <person name="Kitamura H."/>
            <person name="Kitano H."/>
            <person name="Kollias G."/>
            <person name="Krishnan S.P."/>
            <person name="Kruger A."/>
            <person name="Kummerfeld S.K."/>
            <person name="Kurochkin I.V."/>
            <person name="Lareau L.F."/>
            <person name="Lazarevic D."/>
            <person name="Lipovich L."/>
            <person name="Liu J."/>
            <person name="Liuni S."/>
            <person name="McWilliam S."/>
            <person name="Madan Babu M."/>
            <person name="Madera M."/>
            <person name="Marchionni L."/>
            <person name="Matsuda H."/>
            <person name="Matsuzawa S."/>
            <person name="Miki H."/>
            <person name="Mignone F."/>
            <person name="Miyake S."/>
            <person name="Morris K."/>
            <person name="Mottagui-Tabar S."/>
            <person name="Mulder N."/>
            <person name="Nakano N."/>
            <person name="Nakauchi H."/>
            <person name="Ng P."/>
            <person name="Nilsson R."/>
            <person name="Nishiguchi S."/>
            <person name="Nishikawa S."/>
            <person name="Nori F."/>
            <person name="Ohara O."/>
            <person name="Okazaki Y."/>
            <person name="Orlando V."/>
            <person name="Pang K.C."/>
            <person name="Pavan W.J."/>
            <person name="Pavesi G."/>
            <person name="Pesole G."/>
            <person name="Petrovsky N."/>
            <person name="Piazza S."/>
            <person name="Reed J."/>
            <person name="Reid J.F."/>
            <person name="Ring B.Z."/>
            <person name="Ringwald M."/>
            <person name="Rost B."/>
            <person name="Ruan Y."/>
            <person name="Salzberg S.L."/>
            <person name="Sandelin A."/>
            <person name="Schneider C."/>
            <person name="Schoenbach C."/>
            <person name="Sekiguchi K."/>
            <person name="Semple C.A."/>
            <person name="Seno S."/>
            <person name="Sessa L."/>
            <person name="Sheng Y."/>
            <person name="Shibata Y."/>
            <person name="Shimada H."/>
            <person name="Shimada K."/>
            <person name="Silva D."/>
            <person name="Sinclair B."/>
            <person name="Sperling S."/>
            <person name="Stupka E."/>
            <person name="Sugiura K."/>
            <person name="Sultana R."/>
            <person name="Takenaka Y."/>
            <person name="Taki K."/>
            <person name="Tammoja K."/>
            <person name="Tan S.L."/>
            <person name="Tang S."/>
            <person name="Taylor M.S."/>
            <person name="Tegner J."/>
            <person name="Teichmann S.A."/>
            <person name="Ueda H.R."/>
            <person name="van Nimwegen E."/>
            <person name="Verardo R."/>
            <person name="Wei C.L."/>
            <person name="Yagi K."/>
            <person name="Yamanishi H."/>
            <person name="Zabarovsky E."/>
            <person name="Zhu S."/>
            <person name="Zimmer A."/>
            <person name="Hide W."/>
            <person name="Bult C."/>
            <person name="Grimmond S.M."/>
            <person name="Teasdale R.D."/>
            <person name="Liu E.T."/>
            <person name="Brusic V."/>
            <person name="Quackenbush J."/>
            <person name="Wahlestedt C."/>
            <person name="Mattick J.S."/>
            <person name="Hume D.A."/>
            <person name="Kai C."/>
            <person name="Sasaki D."/>
            <person name="Tomaru Y."/>
            <person name="Fukuda S."/>
            <person name="Kanamori-Katayama M."/>
            <person name="Suzuki M."/>
            <person name="Aoki J."/>
            <person name="Arakawa T."/>
            <person name="Iida J."/>
            <person name="Imamura K."/>
            <person name="Itoh M."/>
            <person name="Kato T."/>
            <person name="Kawaji H."/>
            <person name="Kawagashira N."/>
            <person name="Kawashima T."/>
            <person name="Kojima M."/>
            <person name="Kondo S."/>
            <person name="Konno H."/>
            <person name="Nakano K."/>
            <person name="Ninomiya N."/>
            <person name="Nishio T."/>
            <person name="Okada M."/>
            <person name="Plessy C."/>
            <person name="Shibata K."/>
            <person name="Shiraki T."/>
            <person name="Suzuki S."/>
            <person name="Tagami M."/>
            <person name="Waki K."/>
            <person name="Watahiki A."/>
            <person name="Okamura-Oho Y."/>
            <person name="Suzuki H."/>
            <person name="Kawai J."/>
            <person name="Hayashizaki Y."/>
        </authorList>
    </citation>
    <scope>NUCLEOTIDE SEQUENCE [LARGE SCALE MRNA] OF 953-1553; 1845-2470 AND 4123-4836</scope>
    <source>
        <strain evidence="22">C57BL/6J</strain>
        <tissue evidence="20">Spinal cord</tissue>
        <tissue evidence="21">Testis</tissue>
        <tissue evidence="22">Vagina</tissue>
    </source>
</reference>
<reference key="5">
    <citation type="submission" date="2005-02" db="EMBL/GenBank/DDBJ databases">
        <title>Prediction of the coding sequences of mouse homologues of KIAA gene. The complete nucleotide sequences of mouse KIAA-homologous cDNAs identified by screening of terminal sequences of cDNA clones randomly sampled from size-fractionated libraries.</title>
        <authorList>
            <person name="Okazaki N."/>
            <person name="Kikuno R.F."/>
            <person name="Ohara R."/>
            <person name="Inamoto S."/>
            <person name="Nagase T."/>
            <person name="Ohara O."/>
            <person name="Koga H."/>
        </authorList>
    </citation>
    <scope>NUCLEOTIDE SEQUENCE [LARGE SCALE MRNA] OF 2966-4836 (ISOFORM 1)</scope>
    <source>
        <tissue evidence="19">Brain</tissue>
    </source>
</reference>
<reference key="6">
    <citation type="journal article" date="2004" name="Genome Res.">
        <title>The status, quality, and expansion of the NIH full-length cDNA project: the Mammalian Gene Collection (MGC).</title>
        <authorList>
            <consortium name="The MGC Project Team"/>
        </authorList>
    </citation>
    <scope>NUCLEOTIDE SEQUENCE [LARGE SCALE MRNA] OF 3618-4836 (ISOFORM 2)</scope>
    <source>
        <strain evidence="18">C57BL/6J</strain>
        <strain evidence="17">Czech II</strain>
        <tissue evidence="17">Mammary gland</tissue>
        <tissue evidence="18">Olfactory epithelium</tissue>
    </source>
</reference>
<reference key="7">
    <citation type="journal article" date="1999" name="Mamm. Genome">
        <title>Molecular characterization of radiation- and chemically induced mutations associated with neuromuscular tremors, runting, juvenile lethality, and sperm defects in jdf2 mice.</title>
        <authorList>
            <person name="Walkowicz M."/>
            <person name="Ji Y."/>
            <person name="Ren X."/>
            <person name="Horsthemke B."/>
            <person name="Russell L.B."/>
            <person name="Johnson D."/>
            <person name="Rinchik E.M."/>
            <person name="Nicholls R.D."/>
            <person name="Stubbs L."/>
        </authorList>
    </citation>
    <scope>DISEASE</scope>
</reference>
<reference key="8">
    <citation type="journal article" date="2007" name="Proc. Natl. Acad. Sci. U.S.A.">
        <title>Large-scale phosphorylation analysis of mouse liver.</title>
        <authorList>
            <person name="Villen J."/>
            <person name="Beausoleil S.A."/>
            <person name="Gerber S.A."/>
            <person name="Gygi S.P."/>
        </authorList>
    </citation>
    <scope>PHOSPHORYLATION [LARGE SCALE ANALYSIS] AT SER-1578</scope>
    <scope>IDENTIFICATION BY MASS SPECTROMETRY [LARGE SCALE ANALYSIS]</scope>
    <source>
        <tissue>Liver</tissue>
    </source>
</reference>
<reference key="9">
    <citation type="journal article" date="2010" name="Cell">
        <title>A tissue-specific atlas of mouse protein phosphorylation and expression.</title>
        <authorList>
            <person name="Huttlin E.L."/>
            <person name="Jedrychowski M.P."/>
            <person name="Elias J.E."/>
            <person name="Goswami T."/>
            <person name="Rad R."/>
            <person name="Beausoleil S.A."/>
            <person name="Villen J."/>
            <person name="Haas W."/>
            <person name="Sowa M.E."/>
            <person name="Gygi S.P."/>
        </authorList>
    </citation>
    <scope>PHOSPHORYLATION [LARGE SCALE ANALYSIS] AT SER-1578; SER-1943; THR-1945 AND SER-2929</scope>
    <scope>IDENTIFICATION BY MASS SPECTROMETRY [LARGE SCALE ANALYSIS]</scope>
    <source>
        <tissue>Brain</tissue>
        <tissue>Brown adipose tissue</tissue>
        <tissue>Heart</tissue>
        <tissue>Kidney</tissue>
        <tissue>Liver</tissue>
        <tissue>Lung</tissue>
        <tissue>Spleen</tissue>
        <tissue>Testis</tissue>
    </source>
</reference>
<dbReference type="EC" id="2.3.2.26" evidence="1"/>
<dbReference type="EMBL" id="AF061529">
    <property type="protein sequence ID" value="AAC31431.1"/>
    <property type="molecule type" value="mRNA"/>
</dbReference>
<dbReference type="EMBL" id="AF071173">
    <property type="protein sequence ID" value="AAD08658.1"/>
    <property type="molecule type" value="mRNA"/>
</dbReference>
<dbReference type="EMBL" id="AC102121">
    <property type="status" value="NOT_ANNOTATED_CDS"/>
    <property type="molecule type" value="Genomic_DNA"/>
</dbReference>
<dbReference type="EMBL" id="AC102150">
    <property type="status" value="NOT_ANNOTATED_CDS"/>
    <property type="molecule type" value="Genomic_DNA"/>
</dbReference>
<dbReference type="EMBL" id="AK141515">
    <property type="protein sequence ID" value="BAE24711.1"/>
    <property type="molecule type" value="mRNA"/>
</dbReference>
<dbReference type="EMBL" id="AK148361">
    <property type="protein sequence ID" value="BAE28504.1"/>
    <property type="molecule type" value="mRNA"/>
</dbReference>
<dbReference type="EMBL" id="AK161826">
    <property type="protein sequence ID" value="BAE36593.1"/>
    <property type="molecule type" value="mRNA"/>
</dbReference>
<dbReference type="EMBL" id="AK162270">
    <property type="protein sequence ID" value="BAE36828.1"/>
    <property type="molecule type" value="mRNA"/>
</dbReference>
<dbReference type="EMBL" id="AK162708">
    <property type="protein sequence ID" value="BAE37031.1"/>
    <property type="molecule type" value="mRNA"/>
</dbReference>
<dbReference type="EMBL" id="AK220338">
    <property type="protein sequence ID" value="BAD90404.1"/>
    <property type="molecule type" value="mRNA"/>
</dbReference>
<dbReference type="EMBL" id="BC044667">
    <property type="protein sequence ID" value="AAH44667.1"/>
    <property type="molecule type" value="mRNA"/>
</dbReference>
<dbReference type="EMBL" id="BC054829">
    <property type="protein sequence ID" value="AAH54829.1"/>
    <property type="molecule type" value="mRNA"/>
</dbReference>
<dbReference type="CCDS" id="CCDS21318.1">
    <molecule id="Q4U2R1-1"/>
</dbReference>
<dbReference type="RefSeq" id="NP_001347009.1">
    <molecule id="Q4U2R1-1"/>
    <property type="nucleotide sequence ID" value="NM_001360080.1"/>
</dbReference>
<dbReference type="RefSeq" id="NP_034548.2">
    <molecule id="Q4U2R1-1"/>
    <property type="nucleotide sequence ID" value="NM_010418.2"/>
</dbReference>
<dbReference type="RefSeq" id="XP_006540700.1">
    <molecule id="Q4U2R1-1"/>
    <property type="nucleotide sequence ID" value="XM_006540637.4"/>
</dbReference>
<dbReference type="RefSeq" id="XP_006540701.1">
    <property type="nucleotide sequence ID" value="XM_006540638.2"/>
</dbReference>
<dbReference type="RefSeq" id="XP_006540702.1">
    <molecule id="Q4U2R1-2"/>
    <property type="nucleotide sequence ID" value="XM_006540639.3"/>
</dbReference>
<dbReference type="SMR" id="Q4U2R1"/>
<dbReference type="BioGRID" id="200274">
    <property type="interactions" value="73"/>
</dbReference>
<dbReference type="FunCoup" id="Q4U2R1">
    <property type="interactions" value="1885"/>
</dbReference>
<dbReference type="IntAct" id="Q4U2R1">
    <property type="interactions" value="61"/>
</dbReference>
<dbReference type="MINT" id="Q4U2R1"/>
<dbReference type="STRING" id="10090.ENSMUSP00000131573"/>
<dbReference type="GlyGen" id="Q4U2R1">
    <property type="glycosylation" value="9 sites, 3 N-linked glycans (3 sites), 1 O-linked glycan (2 sites)"/>
</dbReference>
<dbReference type="iPTMnet" id="Q4U2R1"/>
<dbReference type="PhosphoSitePlus" id="Q4U2R1"/>
<dbReference type="jPOST" id="Q4U2R1"/>
<dbReference type="PaxDb" id="10090-ENSMUSP00000075579"/>
<dbReference type="PeptideAtlas" id="Q4U2R1"/>
<dbReference type="ProteomicsDB" id="269656">
    <molecule id="Q4U2R1-1"/>
</dbReference>
<dbReference type="ProteomicsDB" id="269657">
    <molecule id="Q4U2R1-2"/>
</dbReference>
<dbReference type="Pumba" id="Q4U2R1"/>
<dbReference type="Antibodypedia" id="22335">
    <property type="antibodies" value="54 antibodies from 10 providers"/>
</dbReference>
<dbReference type="DNASU" id="15204"/>
<dbReference type="Ensembl" id="ENSMUST00000076226.13">
    <molecule id="Q4U2R1-1"/>
    <property type="protein sequence ID" value="ENSMUSP00000075579.7"/>
    <property type="gene ID" value="ENSMUSG00000030451.17"/>
</dbReference>
<dbReference type="Ensembl" id="ENSMUST00000164095.3">
    <molecule id="Q4U2R1-1"/>
    <property type="protein sequence ID" value="ENSMUSP00000131573.2"/>
    <property type="gene ID" value="ENSMUSG00000030451.17"/>
</dbReference>
<dbReference type="Ensembl" id="ENSMUST00000205303.2">
    <molecule id="Q4U2R1-2"/>
    <property type="protein sequence ID" value="ENSMUSP00000145997.2"/>
    <property type="gene ID" value="ENSMUSG00000030451.17"/>
</dbReference>
<dbReference type="GeneID" id="15204"/>
<dbReference type="KEGG" id="mmu:15204"/>
<dbReference type="UCSC" id="uc009hdv.1">
    <molecule id="Q4U2R1-1"/>
    <property type="organism name" value="mouse"/>
</dbReference>
<dbReference type="AGR" id="MGI:103234"/>
<dbReference type="CTD" id="8924"/>
<dbReference type="MGI" id="MGI:103234">
    <property type="gene designation" value="Herc2"/>
</dbReference>
<dbReference type="VEuPathDB" id="HostDB:ENSMUSG00000030451"/>
<dbReference type="eggNOG" id="KOG1426">
    <property type="taxonomic scope" value="Eukaryota"/>
</dbReference>
<dbReference type="GeneTree" id="ENSGT00940000154975"/>
<dbReference type="HOGENOM" id="CLU_000101_0_0_1"/>
<dbReference type="InParanoid" id="Q4U2R1"/>
<dbReference type="OMA" id="WRNHGST"/>
<dbReference type="PhylomeDB" id="Q4U2R1"/>
<dbReference type="TreeFam" id="TF320636"/>
<dbReference type="Reactome" id="R-MMU-3108214">
    <property type="pathway name" value="SUMOylation of DNA damage response and repair proteins"/>
</dbReference>
<dbReference type="Reactome" id="R-MMU-5693565">
    <property type="pathway name" value="Recruitment and ATM-mediated phosphorylation of repair and signaling proteins at DNA double strand breaks"/>
</dbReference>
<dbReference type="Reactome" id="R-MMU-5693571">
    <property type="pathway name" value="Nonhomologous End-Joining (NHEJ)"/>
</dbReference>
<dbReference type="Reactome" id="R-MMU-5693607">
    <property type="pathway name" value="Processing of DNA double-strand break ends"/>
</dbReference>
<dbReference type="Reactome" id="R-MMU-69473">
    <property type="pathway name" value="G2/M DNA damage checkpoint"/>
</dbReference>
<dbReference type="Reactome" id="R-MMU-983168">
    <property type="pathway name" value="Antigen processing: Ubiquitination &amp; Proteasome degradation"/>
</dbReference>
<dbReference type="UniPathway" id="UPA00143"/>
<dbReference type="BioGRID-ORCS" id="15204">
    <property type="hits" value="2 hits in 113 CRISPR screens"/>
</dbReference>
<dbReference type="ChiTaRS" id="Herc2">
    <property type="organism name" value="mouse"/>
</dbReference>
<dbReference type="PRO" id="PR:Q4U2R1"/>
<dbReference type="Proteomes" id="UP000000589">
    <property type="component" value="Chromosome 7"/>
</dbReference>
<dbReference type="RNAct" id="Q4U2R1">
    <property type="molecule type" value="protein"/>
</dbReference>
<dbReference type="Bgee" id="ENSMUSG00000030451">
    <property type="expression patterns" value="Expressed in secondary oocyte and 266 other cell types or tissues"/>
</dbReference>
<dbReference type="ExpressionAtlas" id="Q4U2R1">
    <property type="expression patterns" value="baseline and differential"/>
</dbReference>
<dbReference type="GO" id="GO:0005814">
    <property type="term" value="C:centriole"/>
    <property type="evidence" value="ECO:0007669"/>
    <property type="project" value="UniProtKB-SubCell"/>
</dbReference>
<dbReference type="GO" id="GO:0005737">
    <property type="term" value="C:cytoplasm"/>
    <property type="evidence" value="ECO:0000250"/>
    <property type="project" value="UniProtKB"/>
</dbReference>
<dbReference type="GO" id="GO:0005829">
    <property type="term" value="C:cytosol"/>
    <property type="evidence" value="ECO:0007669"/>
    <property type="project" value="Ensembl"/>
</dbReference>
<dbReference type="GO" id="GO:0005743">
    <property type="term" value="C:mitochondrial inner membrane"/>
    <property type="evidence" value="ECO:0007005"/>
    <property type="project" value="MGI"/>
</dbReference>
<dbReference type="GO" id="GO:0005634">
    <property type="term" value="C:nucleus"/>
    <property type="evidence" value="ECO:0000250"/>
    <property type="project" value="UniProtKB"/>
</dbReference>
<dbReference type="GO" id="GO:0005886">
    <property type="term" value="C:plasma membrane"/>
    <property type="evidence" value="ECO:0007669"/>
    <property type="project" value="Ensembl"/>
</dbReference>
<dbReference type="GO" id="GO:0032183">
    <property type="term" value="F:SUMO binding"/>
    <property type="evidence" value="ECO:0000250"/>
    <property type="project" value="UniProtKB"/>
</dbReference>
<dbReference type="GO" id="GO:0061630">
    <property type="term" value="F:ubiquitin protein ligase activity"/>
    <property type="evidence" value="ECO:0000250"/>
    <property type="project" value="UniProtKB"/>
</dbReference>
<dbReference type="GO" id="GO:0031625">
    <property type="term" value="F:ubiquitin protein ligase binding"/>
    <property type="evidence" value="ECO:0007669"/>
    <property type="project" value="Ensembl"/>
</dbReference>
<dbReference type="GO" id="GO:0008270">
    <property type="term" value="F:zinc ion binding"/>
    <property type="evidence" value="ECO:0007669"/>
    <property type="project" value="UniProtKB-KW"/>
</dbReference>
<dbReference type="GO" id="GO:0006974">
    <property type="term" value="P:DNA damage response"/>
    <property type="evidence" value="ECO:0000250"/>
    <property type="project" value="UniProtKB"/>
</dbReference>
<dbReference type="GO" id="GO:0006281">
    <property type="term" value="P:DNA repair"/>
    <property type="evidence" value="ECO:0007669"/>
    <property type="project" value="UniProtKB-KW"/>
</dbReference>
<dbReference type="GO" id="GO:0045746">
    <property type="term" value="P:negative regulation of Notch signaling pathway"/>
    <property type="evidence" value="ECO:0000314"/>
    <property type="project" value="MGI"/>
</dbReference>
<dbReference type="GO" id="GO:0030182">
    <property type="term" value="P:neuron differentiation"/>
    <property type="evidence" value="ECO:0000314"/>
    <property type="project" value="MGI"/>
</dbReference>
<dbReference type="GO" id="GO:0043161">
    <property type="term" value="P:proteasome-mediated ubiquitin-dependent protein catabolic process"/>
    <property type="evidence" value="ECO:0000315"/>
    <property type="project" value="UniProtKB"/>
</dbReference>
<dbReference type="GO" id="GO:0016567">
    <property type="term" value="P:protein ubiquitination"/>
    <property type="evidence" value="ECO:0000250"/>
    <property type="project" value="UniProtKB"/>
</dbReference>
<dbReference type="GO" id="GO:0007283">
    <property type="term" value="P:spermatogenesis"/>
    <property type="evidence" value="ECO:0000315"/>
    <property type="project" value="MGI"/>
</dbReference>
<dbReference type="CDD" id="cd08664">
    <property type="entry name" value="APC10-HERC2"/>
    <property type="match status" value="1"/>
</dbReference>
<dbReference type="CDD" id="cd00078">
    <property type="entry name" value="HECTc"/>
    <property type="match status" value="1"/>
</dbReference>
<dbReference type="CDD" id="cd14402">
    <property type="entry name" value="UBA_HERC2"/>
    <property type="match status" value="1"/>
</dbReference>
<dbReference type="CDD" id="cd02344">
    <property type="entry name" value="ZZ_HERC2"/>
    <property type="match status" value="1"/>
</dbReference>
<dbReference type="FunFam" id="2.30.30.30:FF:000015">
    <property type="entry name" value="E3 ubiquitin-protein ligase HERC2"/>
    <property type="match status" value="1"/>
</dbReference>
<dbReference type="FunFam" id="2.130.10.30:FF:000003">
    <property type="entry name" value="E3 ubiquitin-protein ligase HERC2 isoform X1"/>
    <property type="match status" value="1"/>
</dbReference>
<dbReference type="FunFam" id="2.130.10.30:FF:000006">
    <property type="entry name" value="E3 ubiquitin-protein ligase HERC2 isoform X1"/>
    <property type="match status" value="1"/>
</dbReference>
<dbReference type="FunFam" id="2.30.30.40:FF:000074">
    <property type="entry name" value="E3 ubiquitin-protein ligase HERC2 isoform X1"/>
    <property type="match status" value="1"/>
</dbReference>
<dbReference type="FunFam" id="2.130.10.30:FF:000004">
    <property type="entry name" value="E3 ubiquitin-protein ligase HERC2 isoform X2"/>
    <property type="match status" value="1"/>
</dbReference>
<dbReference type="FunFam" id="2.60.120.260:FF:000033">
    <property type="entry name" value="E3 ubiquitin-protein ligase HERC2 isoform X2"/>
    <property type="match status" value="1"/>
</dbReference>
<dbReference type="FunFam" id="3.10.120.10:FF:000005">
    <property type="entry name" value="E3 ubiquitin-protein ligase HERC2 isoform X2"/>
    <property type="match status" value="1"/>
</dbReference>
<dbReference type="FunFam" id="3.30.2160.10:FF:000010">
    <property type="entry name" value="E3 ubiquitin-protein ligase HERC2 isoform X2"/>
    <property type="match status" value="1"/>
</dbReference>
<dbReference type="FunFam" id="3.30.60.90:FF:000006">
    <property type="entry name" value="E3 ubiquitin-protein ligase HERC2 isoform X2"/>
    <property type="match status" value="1"/>
</dbReference>
<dbReference type="FunFam" id="3.30.2410.10:FF:000006">
    <property type="entry name" value="probable E3 ubiquitin-protein ligase HERC1 isoform X2"/>
    <property type="match status" value="1"/>
</dbReference>
<dbReference type="Gene3D" id="2.30.30.30">
    <property type="match status" value="1"/>
</dbReference>
<dbReference type="Gene3D" id="3.30.60.90">
    <property type="match status" value="1"/>
</dbReference>
<dbReference type="Gene3D" id="3.10.120.10">
    <property type="entry name" value="Cytochrome b5-like heme/steroid binding domain"/>
    <property type="match status" value="1"/>
</dbReference>
<dbReference type="Gene3D" id="2.60.120.260">
    <property type="entry name" value="Galactose-binding domain-like"/>
    <property type="match status" value="1"/>
</dbReference>
<dbReference type="Gene3D" id="3.30.2160.10">
    <property type="entry name" value="Hect, E3 ligase catalytic domain"/>
    <property type="match status" value="1"/>
</dbReference>
<dbReference type="Gene3D" id="3.30.2410.10">
    <property type="entry name" value="Hect, E3 ligase catalytic domain"/>
    <property type="match status" value="1"/>
</dbReference>
<dbReference type="Gene3D" id="3.90.1750.10">
    <property type="entry name" value="Hect, E3 ligase catalytic domains"/>
    <property type="match status" value="1"/>
</dbReference>
<dbReference type="Gene3D" id="2.130.10.30">
    <property type="entry name" value="Regulator of chromosome condensation 1/beta-lactamase-inhibitor protein II"/>
    <property type="match status" value="3"/>
</dbReference>
<dbReference type="Gene3D" id="2.30.30.40">
    <property type="entry name" value="SH3 Domains"/>
    <property type="match status" value="1"/>
</dbReference>
<dbReference type="InterPro" id="IPR004939">
    <property type="entry name" value="APC_su10/DOC_dom"/>
</dbReference>
<dbReference type="InterPro" id="IPR006624">
    <property type="entry name" value="Beta-propeller_rpt_TECPR"/>
</dbReference>
<dbReference type="InterPro" id="IPR021097">
    <property type="entry name" value="CPH_domain"/>
</dbReference>
<dbReference type="InterPro" id="IPR001199">
    <property type="entry name" value="Cyt_B5-like_heme/steroid-bd"/>
</dbReference>
<dbReference type="InterPro" id="IPR036400">
    <property type="entry name" value="Cyt_B5-like_heme/steroid_sf"/>
</dbReference>
<dbReference type="InterPro" id="IPR008979">
    <property type="entry name" value="Galactose-bd-like_sf"/>
</dbReference>
<dbReference type="InterPro" id="IPR000569">
    <property type="entry name" value="HECT_dom"/>
</dbReference>
<dbReference type="InterPro" id="IPR035983">
    <property type="entry name" value="Hect_E3_ubiquitin_ligase"/>
</dbReference>
<dbReference type="InterPro" id="IPR037976">
    <property type="entry name" value="HERC2_APC10"/>
</dbReference>
<dbReference type="InterPro" id="IPR010606">
    <property type="entry name" value="Mib_Herc2"/>
</dbReference>
<dbReference type="InterPro" id="IPR037252">
    <property type="entry name" value="Mib_Herc2_sf"/>
</dbReference>
<dbReference type="InterPro" id="IPR009091">
    <property type="entry name" value="RCC1/BLIP-II"/>
</dbReference>
<dbReference type="InterPro" id="IPR000408">
    <property type="entry name" value="Reg_chr_condens"/>
</dbReference>
<dbReference type="InterPro" id="IPR014722">
    <property type="entry name" value="Rib_uL2_dom2"/>
</dbReference>
<dbReference type="InterPro" id="IPR051625">
    <property type="entry name" value="Signaling_Regulatory_Domain"/>
</dbReference>
<dbReference type="InterPro" id="IPR000433">
    <property type="entry name" value="Znf_ZZ"/>
</dbReference>
<dbReference type="InterPro" id="IPR043145">
    <property type="entry name" value="Znf_ZZ_sf"/>
</dbReference>
<dbReference type="InterPro" id="IPR041987">
    <property type="entry name" value="ZZ_HERC2"/>
</dbReference>
<dbReference type="PANTHER" id="PTHR22872">
    <property type="entry name" value="BTK-BINDING PROTEIN-RELATED"/>
    <property type="match status" value="1"/>
</dbReference>
<dbReference type="PANTHER" id="PTHR22872:SF2">
    <property type="entry name" value="INHIBITOR OF BRUTON TYROSINE KINASE"/>
    <property type="match status" value="1"/>
</dbReference>
<dbReference type="Pfam" id="PF03256">
    <property type="entry name" value="ANAPC10"/>
    <property type="match status" value="1"/>
</dbReference>
<dbReference type="Pfam" id="PF11515">
    <property type="entry name" value="Cul7"/>
    <property type="match status" value="1"/>
</dbReference>
<dbReference type="Pfam" id="PF00173">
    <property type="entry name" value="Cyt-b5"/>
    <property type="match status" value="1"/>
</dbReference>
<dbReference type="Pfam" id="PF00632">
    <property type="entry name" value="HECT"/>
    <property type="match status" value="1"/>
</dbReference>
<dbReference type="Pfam" id="PF06701">
    <property type="entry name" value="MIB_HERC2"/>
    <property type="match status" value="1"/>
</dbReference>
<dbReference type="Pfam" id="PF25390">
    <property type="entry name" value="WD40_RLD"/>
    <property type="match status" value="4"/>
</dbReference>
<dbReference type="Pfam" id="PF00569">
    <property type="entry name" value="ZZ"/>
    <property type="match status" value="1"/>
</dbReference>
<dbReference type="PRINTS" id="PR00633">
    <property type="entry name" value="RCCNDNSATION"/>
</dbReference>
<dbReference type="SMART" id="SM01337">
    <property type="entry name" value="APC10"/>
    <property type="match status" value="1"/>
</dbReference>
<dbReference type="SMART" id="SM01117">
    <property type="entry name" value="Cyt-b5"/>
    <property type="match status" value="1"/>
</dbReference>
<dbReference type="SMART" id="SM00119">
    <property type="entry name" value="HECTc"/>
    <property type="match status" value="1"/>
</dbReference>
<dbReference type="SMART" id="SM00706">
    <property type="entry name" value="TECPR"/>
    <property type="match status" value="4"/>
</dbReference>
<dbReference type="SMART" id="SM00291">
    <property type="entry name" value="ZnF_ZZ"/>
    <property type="match status" value="1"/>
</dbReference>
<dbReference type="SUPFAM" id="SSF55856">
    <property type="entry name" value="Cytochrome b5-like heme/steroid binding domain"/>
    <property type="match status" value="1"/>
</dbReference>
<dbReference type="SUPFAM" id="SSF49785">
    <property type="entry name" value="Galactose-binding domain-like"/>
    <property type="match status" value="1"/>
</dbReference>
<dbReference type="SUPFAM" id="SSF56204">
    <property type="entry name" value="Hect, E3 ligase catalytic domain"/>
    <property type="match status" value="1"/>
</dbReference>
<dbReference type="SUPFAM" id="SSF159034">
    <property type="entry name" value="Mib/herc2 domain-like"/>
    <property type="match status" value="1"/>
</dbReference>
<dbReference type="SUPFAM" id="SSF50985">
    <property type="entry name" value="RCC1/BLIP-II"/>
    <property type="match status" value="3"/>
</dbReference>
<dbReference type="SUPFAM" id="SSF63748">
    <property type="entry name" value="Tudor/PWWP/MBT"/>
    <property type="match status" value="1"/>
</dbReference>
<dbReference type="PROSITE" id="PS50255">
    <property type="entry name" value="CYTOCHROME_B5_2"/>
    <property type="match status" value="1"/>
</dbReference>
<dbReference type="PROSITE" id="PS51284">
    <property type="entry name" value="DOC"/>
    <property type="match status" value="1"/>
</dbReference>
<dbReference type="PROSITE" id="PS50237">
    <property type="entry name" value="HECT"/>
    <property type="match status" value="1"/>
</dbReference>
<dbReference type="PROSITE" id="PS51416">
    <property type="entry name" value="MIB_HERC2"/>
    <property type="match status" value="1"/>
</dbReference>
<dbReference type="PROSITE" id="PS00626">
    <property type="entry name" value="RCC1_2"/>
    <property type="match status" value="1"/>
</dbReference>
<dbReference type="PROSITE" id="PS50012">
    <property type="entry name" value="RCC1_3"/>
    <property type="match status" value="19"/>
</dbReference>
<dbReference type="PROSITE" id="PS01357">
    <property type="entry name" value="ZF_ZZ_1"/>
    <property type="match status" value="1"/>
</dbReference>
<dbReference type="PROSITE" id="PS50135">
    <property type="entry name" value="ZF_ZZ_2"/>
    <property type="match status" value="1"/>
</dbReference>
<sequence length="4836" mass="527456">MPSESFCLAAQSRLDSKWLKTDIQLAFTRDGLCGLWNEMVKDGEIVYTGTELAQNRELPLRKDDGVDAQSGTKKEDLNDKEKKEEEETPAPVYRAKSILESWVWGRQPDVNELKECLSVLVKEQQALAVQSATTTLSALRLKQRLVILERYFIALNRTVFQENVKVKWKSSSISVPPTEKKSARPTGRGVEGLARVGSRAALSFAFAFLRRAWRSGEDADLCSELLQESLDALRALPEASLFDESTVSSVWLEVVERATRFLRSVVTGDVHGTPGTKGPGGVPLQDQHLALAILLELAVQRGTLSQMLSAILLLLQLWDSGAQETDNERSAQGTSAPLLPLLQRFQSIICSKDVPHTESDMHLLSGPLSPNESFLRYLTLPQDNELAIDLRQTAVVVMAHLDRLATPCMPPLCSSPTSHKGSLQEVIGWGLIGWKYYANVIGPIQCEGLASLGVMQVACAEKRFLILSRNGRVYTQAYNSDMLAPQLVQGLASRNIVKIAAHSDGHHYLALAATGEVYSWGCGDGGRLGHGDTVPLEEPKVISAFSGKQAGKHVVHIACGSTYSAAITAEGELYTWGRGNYGRLGHGSSEDEAIPMLVAGLKGLKVIDVACGSGDAQTLAVTENGQVWSWGDGDYGKLGRGGSDGCKTPKLIEKLQDLDVIKVRCGSQFSIALTKDGQVYSWGKGDNQRLGHGTEEHVRYPKLLEGLQGKKVIDVAAGSTHCLALTEDSEVHSWGSNDQCQHFDTLRVTKPEPTALPGLDSKHIVGIACGPAQSFAWSSCSEWSIGLRVPFVVDICSMTFEQLDLLLRQVSEGMDGTADWPPPQEKECMAVATLNLLRLQLHAAISHQVDPEFLGLGLGSVLLNSLKQTVVTLASSAGVLSTVQSAAQAVLQSGWSVLLPTAEERARALSALLPCTVSGNEVNISPGRRFMIDLLVGSLMADGGLESALNAAITAEIQDIEAKKEAQKEKEIDEQEASASTFHRSRTPLDKDLINTGIYESSGKQCLPLVQLIQQLLRNIASQTVARLKDVARRISSCLDFEQQSCERSASLDLLLRFQRLLISKLYPGEKIGPISDTSSPELMGVGSLLKKYTALVCTHIGDILPVAASIASSSWQHFAEVACVMEGDFTGVLLPELVVSIVLLLSKNASLMQEAGAIPLLGGLLEHLDRFNHLAPGKERDDHEELAWPGIMESFFTGQNCRNNEEVTLIRKADLENHNKDGGFWTVIDGKVYGIKDFQTQSLTGNSILAQFAGEDPVVALEAALQFEDTQESMHAFCVGQYLEPDQEVVTIPDLGSLSSPLIDTERNLGLLLGLHASYLAMSTPLSPVEVECAKWLQSSIFSGGLQTSQIHYSYNEEKDEDHCSSPGGTPISKSRLCSHRWALGDHSQAFLQAIADNNIQDYNVKDFLCQIERYCRQCHLTTPITFPPEHPVEEVGRLLLCCLLKHEDLGHVALSLVHVGTLGIEQVKHRTLPKSVVDVCRVVYQAKCSLIKTHQEQGRSYKEVCAPVIERLRFLFNELRPAVCSDLSIMSKFKLLGSLPRWRRIAQKIIRERRKKRVPKKPESIDSEEKIGNEESDLEEACVLPHSPINVDKRPISMKSPKDKWQPLLNTVTGVHKYKWLKQNVQGLYPQSALLNTIVEFALKEEPVDVEKMRKCLLKQLERAEVRLEGIDTILKLAAKSFLLPSVQYAMFCGWQRLIPEGIDIGEPLTDCLRDVDLIPPFNRMLLEVTFGKLYAWAVQNIRSVLMDASARFKELGIQPVPLQTITNENPAGPSLGTIPQARFLLVMLSMLTLQHGANNLDLLLNSGTLALTQTALRLIGPTCDSVEDDMNASARGASATVLEETRKETAPVQLPVSGPELAAMMKIGTRVMRGVDWKWGDQDGPPPGLGRVIGELGEDGWIRVQWDTGSTNSYRMGKEGKYDLKLVELPVSSQPSAEDSDTEDDSEAEQGERNIHPTAMMLTSVINLLQTLCLSVGVHADIMQSEATKTLCGLLRMLVESGTTDKPAPPDRLVAREQHRSWCTLGFVRSIALTPQACGALSSPRWITLLMKVVEGHAPFTAASLQRQILAVHLLQAVLPSWDKTERARDMKCLVEKLFGFLGSLLTTCSSDVPLLRESTLRKRRARPQASLTATHSSTLAEEVVGLLRTLHSLTQWNGLINKYINSQLCSVTQSYAGKTSERAQLEDYFPDSENLEVGGLMAVLAVIGGIDGRLRLGGQVMHDEFGEGTVTRITPKGRITVQFCDMRMCRVCPLNQLKPLPAVAFSVNNLPFTEPMLSVWAELVNLAGSKLEKHKTKKSAKPAFAGQVDLDLLRSQQLKLYILKAGRALLSHQDKLRQILSQPAVQGTGTLQTDDGAAASPDLGDMSPEGPQPPMILLQQLLSSATQPSPVKAIFDKQELEAAALALCQCLAVESTHPSSPGCEDCSSSEATTPVSVQHIHLARAKKRRQSPAPALPIVVQLMEMGFPRKNIEFALKSLTGTSGNASGLPGVEALVGWLLDHSDVQVTEFSDAETLSDEYSDEEVVEDVDDTPYPVAAGAVVTESQTYKKRADFLSNDDYAVYVRENVQVGMMVRCCRTYEEVCEGDVGKVIKLDRDGLHDLNVQCDWQQKGGTYWVRYIHVELIGYPPPSSSSHIKIGDKVRVKASVTTPKYKWGSVTHQSVGLVKAFSANGKDIIVDFPQQSHWTGLLSEMELVPSIHPGVTCDGCQTFPINGSRFKCRNCDDFDFCETCFKTKKHNTRHTFGRINEPGQSAVFCGRSGKQLKRCHSSQPGMLLDSWSRMVKSLNVSSSVNQASRLIDGSEPCWQSSGSQGKHWIRLEIFPDVLVHRLKMIVDPADSSYMPSLVVVSGGNSLNNLIELKTININQTDTTVPLLSDCAEYHRYIEIAIKQCRSSGIDCKIHGLILLGRIRAEEEDLAAVPFLASDNEEEEDDKGSTGSLIRKKTPGLESTATIRTKVFVWGLNDKDQLGGLKGSKIKVPSFSETLSALNVVQVAGGSKSLFAVTVEGKVYSCGEATNGRLGLGMSSGTVPIPRQITALSSYVVKKVAVHSGGRHATALTVDGKVFSWGEGDDGKLGHFSRMNCDKPRLIEALKTKRIRDIACGSSHSAALTSSGELYTWGLGEYGRLGHGDNTTQLKPKMVKVLLGHRVIQVACGSRDAQTLALTDEGLVFSWGDGDFGKLGRGGSEGCNIPQNIERLNGQGVCQIECGAQFSLALTKSGVVWTWGKGDYFRLGHGSDVHVRKPQVVEGLRGKKIVHVAVGALHCLAVTDSGQVYAWGDNDHGQQGNGTTTVNRKPTLVQGLEGQKITRVACGSSHSVAWTTVDVATPSVHEPVLFQTARDPLGASYLGVPSDADSSSSSNKISGANNCKPNRPSLAKILLSLEGNLAKQQALSHILTALQIMYARDAVVGALMPAGMLAPVECPSFSSSAPASDVSAMASPMHMEDSTLAADLEDRLSPNLWQEKREIVSSEDAVTPSAVTPSAPSASSRPFIPVTDDPGAASIIAETMTKTKEDVESQNKTSGPEPQSLDEFTSLLIPDDTRVVVELLKLSVCSRAGDKGREVLSAVLSGMGTAYPQVADMLLELCVTELEDVATDSQSGRLSSQPVVVESSHPYTDDTSTSGTVKIPGAEGLRVEFDRQCSTERRHDPLTVMDGVNRIVSVRSGREWSDWSSELRIPGDELKWKFISDGSVNGWGWRFTVYPIMPAAGPKDLLSDRCVLSCPSMDLVTCLLDFRLNLTSNRSIVPRLAASLAACAQLSALAASHRMWALQRLRRLLTTEFGQSININRLLGENDGESRALSFTGSALAALVKGLPEALQRQFEYEDPIVRGGKQLLHSPFFKVLVALACDLELDTLPCCAETHKWAWFRRYCMASRVAVALDKRTPLPRLFLDEVAKKIRELMADSESMDVLHESHSIFKREQDEQLVQWMNRRPDDWTLSAGGSGTIYGWGHNHRGQLGGIEGAKVKVPTPCEALATLRPVQLIGGEQTLFAVTADGKLYATGYGAGGRLGIGGTESVSTPTLLESIQHVFIKKVAVNSGGKHCLALSSEGEVYSWGEAEDGKLGHGNRSPCDRPRVIESLRGIEVVDVAAGGAHSACVTAAGDLYTWGKGRYGRLGHSDSEDQLKPKLVEALQGHRVIDIACGSGDAQTLCLTDDDTVWSWGDGDYGKLGRGGSDGCKVPMKIDSLTGLGVVKVECGSQFSVALTKSGAVYTWGKGDYHRLGHGSDDHVRRPRQVQGLQGKKVIAIATGSLHCVCCTEDGEVYTWGDNDEGQLGDGTTNAIQRPRLVAALQGKKVNRVACGSAHTLAWSTSKPASAGKLPAQVPMEYNHLQEIPIIALRNRLLLLHHISELFCPCIPMFDLEGSLDETGLGPSVGFDTLRGILISQGKEAAFRKVVQATMVRDRQHGPVVELNRIQVKRSRSKGGLAGPDGTKSVFGQMCAKMSSFSPDSLLLPHRVWKVKFVGESVDDCGGGYSESIAEICEELQNGLTPLLIVTPNGRDESGANRDCYLLNPATRAPVHCSMFRFLGVLLGIAIRTGSPLSLNLAEPVWKQLAGMSLTIADLSEVDKDFIPGLMYIRDNEATSEEFEAMSLPFTVPSASGQDIQLSSKHTHITLDNRAEYVRLAINYRLHEFDEQVAAVREGMARVVPVPLLSLFTGYELETMVCGSPDIPLHLLKSVATYKGIEPSASLVQWFWEVMESFSNTERSLFLRFVWGRTRLPRTIADFRGRDFVIQVLDKYNPPDHFLPESYTCFFLLKLPRYSCKQVLEEKLKYAIHFCKSIDTDDYARIALTGEPAADDSSEDSDNEDADSFASDSTQDYLTGH</sequence>
<evidence type="ECO:0000250" key="1">
    <source>
        <dbReference type="UniProtKB" id="O95714"/>
    </source>
</evidence>
<evidence type="ECO:0000255" key="2"/>
<evidence type="ECO:0000255" key="3">
    <source>
        <dbReference type="PROSITE-ProRule" id="PRU00104"/>
    </source>
</evidence>
<evidence type="ECO:0000255" key="4">
    <source>
        <dbReference type="PROSITE-ProRule" id="PRU00228"/>
    </source>
</evidence>
<evidence type="ECO:0000255" key="5">
    <source>
        <dbReference type="PROSITE-ProRule" id="PRU00279"/>
    </source>
</evidence>
<evidence type="ECO:0000255" key="6">
    <source>
        <dbReference type="PROSITE-ProRule" id="PRU00614"/>
    </source>
</evidence>
<evidence type="ECO:0000255" key="7">
    <source>
        <dbReference type="PROSITE-ProRule" id="PRU00749"/>
    </source>
</evidence>
<evidence type="ECO:0000256" key="8">
    <source>
        <dbReference type="SAM" id="MobiDB-lite"/>
    </source>
</evidence>
<evidence type="ECO:0000269" key="9">
    <source>
    </source>
</evidence>
<evidence type="ECO:0000269" key="10">
    <source>
    </source>
</evidence>
<evidence type="ECO:0000269" key="11">
    <source>
    </source>
</evidence>
<evidence type="ECO:0000269" key="12">
    <source>
    </source>
</evidence>
<evidence type="ECO:0000303" key="13">
    <source>
    </source>
</evidence>
<evidence type="ECO:0000305" key="14"/>
<evidence type="ECO:0000312" key="15">
    <source>
        <dbReference type="EMBL" id="AAC31431.1"/>
    </source>
</evidence>
<evidence type="ECO:0000312" key="16">
    <source>
        <dbReference type="EMBL" id="AAD08658.1"/>
    </source>
</evidence>
<evidence type="ECO:0000312" key="17">
    <source>
        <dbReference type="EMBL" id="AAH44667.1"/>
    </source>
</evidence>
<evidence type="ECO:0000312" key="18">
    <source>
        <dbReference type="EMBL" id="AAH54829.1"/>
    </source>
</evidence>
<evidence type="ECO:0000312" key="19">
    <source>
        <dbReference type="EMBL" id="BAD90404.1"/>
    </source>
</evidence>
<evidence type="ECO:0000312" key="20">
    <source>
        <dbReference type="EMBL" id="BAE24711.1"/>
    </source>
</evidence>
<evidence type="ECO:0000312" key="21">
    <source>
        <dbReference type="EMBL" id="BAE36593.1"/>
    </source>
</evidence>
<evidence type="ECO:0000312" key="22">
    <source>
        <dbReference type="EMBL" id="BAE37031.1"/>
    </source>
</evidence>
<evidence type="ECO:0000312" key="23">
    <source>
        <dbReference type="MGI" id="MGI:103234"/>
    </source>
</evidence>
<evidence type="ECO:0007744" key="24">
    <source>
    </source>
</evidence>
<evidence type="ECO:0007744" key="25">
    <source>
    </source>
</evidence>
<keyword id="KW-0025">Alternative splicing</keyword>
<keyword id="KW-0175">Coiled coil</keyword>
<keyword id="KW-0963">Cytoplasm</keyword>
<keyword id="KW-0206">Cytoskeleton</keyword>
<keyword id="KW-0227">DNA damage</keyword>
<keyword id="KW-0234">DNA repair</keyword>
<keyword id="KW-0479">Metal-binding</keyword>
<keyword id="KW-0539">Nucleus</keyword>
<keyword id="KW-0597">Phosphoprotein</keyword>
<keyword id="KW-1185">Reference proteome</keyword>
<keyword id="KW-0677">Repeat</keyword>
<keyword id="KW-0808">Transferase</keyword>
<keyword id="KW-0832">Ubl conjugation</keyword>
<keyword id="KW-0833">Ubl conjugation pathway</keyword>
<keyword id="KW-0862">Zinc</keyword>
<keyword id="KW-0863">Zinc-finger</keyword>
<protein>
    <recommendedName>
        <fullName>E3 ubiquitin-protein ligase HERC2</fullName>
        <ecNumber evidence="1">2.3.2.26</ecNumber>
    </recommendedName>
    <alternativeName>
        <fullName>HECT domain and RCC1-like domain-containing protein 2</fullName>
    </alternativeName>
    <alternativeName>
        <fullName>HECT-type E3 ubiquitin transferase HERC2</fullName>
    </alternativeName>
</protein>
<feature type="chain" id="PRO_0000229740" description="E3 ubiquitin-protein ligase HERC2">
    <location>
        <begin position="1"/>
        <end position="4836"/>
    </location>
</feature>
<feature type="repeat" description="RCC1 1-1">
    <location>
        <begin position="416"/>
        <end position="462"/>
    </location>
</feature>
<feature type="repeat" description="RCC1 1-2">
    <location>
        <begin position="463"/>
        <end position="513"/>
    </location>
</feature>
<feature type="repeat" description="RCC1 1-3">
    <location>
        <begin position="514"/>
        <end position="569"/>
    </location>
</feature>
<feature type="repeat" description="RCC1 1-4">
    <location>
        <begin position="570"/>
        <end position="621"/>
    </location>
</feature>
<feature type="repeat" description="RCC1 1-5">
    <location>
        <begin position="624"/>
        <end position="675"/>
    </location>
</feature>
<feature type="repeat" description="RCC1 1-6">
    <location>
        <begin position="676"/>
        <end position="727"/>
    </location>
</feature>
<feature type="repeat" description="RCC1 1-7">
    <location>
        <begin position="729"/>
        <end position="779"/>
    </location>
</feature>
<feature type="domain" description="Cytochrome b5 heme-binding" evidence="5">
    <location>
        <begin position="1208"/>
        <end position="1284"/>
    </location>
</feature>
<feature type="domain" description="MIB/HERC2" evidence="7">
    <location>
        <begin position="1860"/>
        <end position="1933"/>
    </location>
</feature>
<feature type="domain" description="CPH" evidence="2">
    <location>
        <begin position="2555"/>
        <end position="2631"/>
    </location>
</feature>
<feature type="domain" description="DOC" evidence="6">
    <location>
        <begin position="2760"/>
        <end position="2937"/>
    </location>
</feature>
<feature type="repeat" description="RCC1 2-1">
    <location>
        <begin position="2959"/>
        <end position="3010"/>
    </location>
</feature>
<feature type="repeat" description="RCC1 2-2">
    <location>
        <begin position="3011"/>
        <end position="3065"/>
    </location>
</feature>
<feature type="repeat" description="RCC1 2-3">
    <location>
        <begin position="3066"/>
        <end position="3117"/>
    </location>
</feature>
<feature type="repeat" description="RCC1 2-4">
    <location>
        <begin position="3119"/>
        <end position="3169"/>
    </location>
</feature>
<feature type="repeat" description="RCC1 2-5">
    <location>
        <begin position="3172"/>
        <end position="3223"/>
    </location>
</feature>
<feature type="repeat" description="RCC1 2-6">
    <location>
        <begin position="3225"/>
        <end position="3275"/>
    </location>
</feature>
<feature type="repeat" description="RCC1 2-7">
    <location>
        <begin position="3276"/>
        <end position="3327"/>
    </location>
</feature>
<feature type="repeat" description="RCC1 3-1">
    <location>
        <begin position="3953"/>
        <end position="4004"/>
    </location>
</feature>
<feature type="repeat" description="RCC1 3-2">
    <location>
        <begin position="4006"/>
        <end position="4058"/>
    </location>
</feature>
<feature type="repeat" description="RCC1 3-3">
    <location>
        <begin position="4060"/>
        <end position="4110"/>
    </location>
</feature>
<feature type="repeat" description="RCC1 3-4">
    <location>
        <begin position="4112"/>
        <end position="4164"/>
    </location>
</feature>
<feature type="repeat" description="RCC1 3-5">
    <location>
        <begin position="4166"/>
        <end position="4216"/>
    </location>
</feature>
<feature type="repeat" description="RCC1 3-6">
    <location>
        <begin position="4218"/>
        <end position="4268"/>
    </location>
</feature>
<feature type="repeat" description="RCC1 3-7">
    <location>
        <begin position="4270"/>
        <end position="4320"/>
    </location>
</feature>
<feature type="domain" description="HECT" evidence="3">
    <location>
        <begin position="4459"/>
        <end position="4796"/>
    </location>
</feature>
<feature type="zinc finger region" description="ZZ-type" evidence="4">
    <location>
        <begin position="2704"/>
        <end position="2756"/>
    </location>
</feature>
<feature type="region of interest" description="Disordered" evidence="8">
    <location>
        <begin position="58"/>
        <end position="90"/>
    </location>
</feature>
<feature type="region of interest" description="Disordered" evidence="8">
    <location>
        <begin position="2351"/>
        <end position="2376"/>
    </location>
</feature>
<feature type="region of interest" description="Disordered" evidence="8">
    <location>
        <begin position="2928"/>
        <end position="2947"/>
    </location>
</feature>
<feature type="region of interest" description="Disordered" evidence="8">
    <location>
        <begin position="3479"/>
        <end position="3499"/>
    </location>
</feature>
<feature type="region of interest" description="Disordered" evidence="8">
    <location>
        <begin position="3517"/>
        <end position="3537"/>
    </location>
</feature>
<feature type="region of interest" description="Disordered" evidence="8">
    <location>
        <begin position="3604"/>
        <end position="3632"/>
    </location>
</feature>
<feature type="region of interest" description="Disordered" evidence="8">
    <location>
        <begin position="4806"/>
        <end position="4836"/>
    </location>
</feature>
<feature type="coiled-coil region" evidence="2">
    <location>
        <begin position="948"/>
        <end position="981"/>
    </location>
</feature>
<feature type="compositionally biased region" description="Basic and acidic residues" evidence="8">
    <location>
        <begin position="72"/>
        <end position="85"/>
    </location>
</feature>
<feature type="compositionally biased region" description="Low complexity" evidence="8">
    <location>
        <begin position="3480"/>
        <end position="3495"/>
    </location>
</feature>
<feature type="compositionally biased region" description="Polar residues" evidence="8">
    <location>
        <begin position="3604"/>
        <end position="3613"/>
    </location>
</feature>
<feature type="compositionally biased region" description="Polar residues" evidence="8">
    <location>
        <begin position="3620"/>
        <end position="3631"/>
    </location>
</feature>
<feature type="compositionally biased region" description="Acidic residues" evidence="8">
    <location>
        <begin position="4808"/>
        <end position="4822"/>
    </location>
</feature>
<feature type="active site" description="Glycyl thioester intermediate" evidence="3">
    <location>
        <position position="4764"/>
    </location>
</feature>
<feature type="binding site" evidence="4">
    <location>
        <position position="2709"/>
    </location>
    <ligand>
        <name>Zn(2+)</name>
        <dbReference type="ChEBI" id="CHEBI:29105"/>
        <label>1</label>
    </ligand>
</feature>
<feature type="binding site" evidence="4">
    <location>
        <position position="2712"/>
    </location>
    <ligand>
        <name>Zn(2+)</name>
        <dbReference type="ChEBI" id="CHEBI:29105"/>
        <label>1</label>
    </ligand>
</feature>
<feature type="binding site" evidence="4">
    <location>
        <position position="2724"/>
    </location>
    <ligand>
        <name>Zn(2+)</name>
        <dbReference type="ChEBI" id="CHEBI:29105"/>
        <label>2</label>
    </ligand>
</feature>
<feature type="binding site" evidence="4">
    <location>
        <position position="2727"/>
    </location>
    <ligand>
        <name>Zn(2+)</name>
        <dbReference type="ChEBI" id="CHEBI:29105"/>
        <label>2</label>
    </ligand>
</feature>
<feature type="binding site" evidence="4">
    <location>
        <position position="2733"/>
    </location>
    <ligand>
        <name>Zn(2+)</name>
        <dbReference type="ChEBI" id="CHEBI:29105"/>
        <label>1</label>
    </ligand>
</feature>
<feature type="binding site" evidence="4">
    <location>
        <position position="2736"/>
    </location>
    <ligand>
        <name>Zn(2+)</name>
        <dbReference type="ChEBI" id="CHEBI:29105"/>
        <label>1</label>
    </ligand>
</feature>
<feature type="binding site" evidence="4">
    <location>
        <position position="2742"/>
    </location>
    <ligand>
        <name>Zn(2+)</name>
        <dbReference type="ChEBI" id="CHEBI:29105"/>
        <label>2</label>
    </ligand>
</feature>
<feature type="binding site" evidence="4">
    <location>
        <position position="2746"/>
    </location>
    <ligand>
        <name>Zn(2+)</name>
        <dbReference type="ChEBI" id="CHEBI:29105"/>
        <label>2</label>
    </ligand>
</feature>
<feature type="modified residue" description="Phosphothreonine" evidence="1">
    <location>
        <position position="273"/>
    </location>
</feature>
<feature type="modified residue" description="Phosphothreonine" evidence="1">
    <location>
        <position position="648"/>
    </location>
</feature>
<feature type="modified residue" description="Phosphoserine" evidence="24 25">
    <location>
        <position position="1578"/>
    </location>
</feature>
<feature type="modified residue" description="Phosphoserine" evidence="25">
    <location>
        <position position="1943"/>
    </location>
</feature>
<feature type="modified residue" description="Phosphothreonine" evidence="25">
    <location>
        <position position="1945"/>
    </location>
</feature>
<feature type="modified residue" description="Phosphoserine" evidence="1">
    <location>
        <position position="2455"/>
    </location>
</feature>
<feature type="modified residue" description="Phosphoserine" evidence="25">
    <location>
        <position position="2929"/>
    </location>
</feature>
<feature type="modified residue" description="Phosphoserine" evidence="1">
    <location>
        <position position="4812"/>
    </location>
</feature>
<feature type="modified residue" description="Phosphoserine" evidence="1">
    <location>
        <position position="4813"/>
    </location>
</feature>
<feature type="modified residue" description="Phosphoserine" evidence="1">
    <location>
        <position position="4816"/>
    </location>
</feature>
<feature type="modified residue" description="Phosphothreonine" evidence="1">
    <location>
        <position position="4829"/>
    </location>
</feature>
<feature type="splice variant" id="VSP_051975" description="In isoform 2." evidence="13">
    <location>
        <begin position="3637"/>
        <end position="3672"/>
    </location>
</feature>
<feature type="sequence conflict" description="In Ref. 1; AAC31431." evidence="14" ref="1">
    <original>H</original>
    <variation>L</variation>
    <location>
        <position position="692"/>
    </location>
</feature>
<feature type="sequence conflict" description="In Ref. 2; AAD08658." evidence="14" ref="2">
    <original>A</original>
    <variation>V</variation>
    <location>
        <position position="724"/>
    </location>
</feature>
<feature type="sequence conflict" description="In Ref. 2; AAD08658." evidence="14" ref="2">
    <original>R</original>
    <variation>G</variation>
    <location>
        <position position="747"/>
    </location>
</feature>
<feature type="sequence conflict" description="In Ref. 2; AAD08658." evidence="14" ref="2">
    <original>L</original>
    <variation>F</variation>
    <location>
        <position position="756"/>
    </location>
</feature>
<feature type="sequence conflict" description="In Ref. 2; AAD08658." evidence="14" ref="2">
    <original>R</original>
    <variation>P</variation>
    <location>
        <position position="929"/>
    </location>
</feature>
<feature type="sequence conflict" description="In Ref. 2; AAD08658." evidence="14" ref="2">
    <original>S</original>
    <variation>N</variation>
    <location>
        <position position="1114"/>
    </location>
</feature>
<feature type="sequence conflict" description="In Ref. 2; AAD08658." evidence="14" ref="2">
    <original>G</original>
    <variation>D</variation>
    <location>
        <position position="1235"/>
    </location>
</feature>
<feature type="sequence conflict" description="In Ref. 1; AAC31431." evidence="14" ref="1">
    <original>A</original>
    <variation>P</variation>
    <location>
        <position position="2348"/>
    </location>
</feature>
<feature type="sequence conflict" description="In Ref. 4; BAE36828." evidence="14" ref="4">
    <original>G</original>
    <variation>S</variation>
    <location>
        <position position="2470"/>
    </location>
</feature>
<feature type="sequence conflict" description="In Ref. 1; AAC31431." evidence="14" ref="1">
    <original>E</original>
    <variation>D</variation>
    <location>
        <position position="2523"/>
    </location>
</feature>
<feature type="sequence conflict" description="In Ref. 1; AAC31431." evidence="14" ref="1">
    <original>Y</original>
    <variation>F</variation>
    <location>
        <position position="2567"/>
    </location>
</feature>
<feature type="sequence conflict" description="In Ref. 1; AAC31431." evidence="14" ref="1">
    <original>V</original>
    <variation>L</variation>
    <location>
        <position position="2572"/>
    </location>
</feature>
<feature type="sequence conflict" description="In Ref. 2; AAD08658." evidence="14" ref="2">
    <original>E</original>
    <variation>Q</variation>
    <location>
        <position position="3095"/>
    </location>
</feature>
<feature type="sequence conflict" description="In Ref. 2; AAD08658." evidence="14" ref="2">
    <original>C</original>
    <variation>Y</variation>
    <location>
        <position position="3107"/>
    </location>
</feature>
<feature type="sequence conflict" description="In Ref. 2; AAD08658." evidence="14" ref="2">
    <original>A</original>
    <variation>P</variation>
    <location>
        <position position="3114"/>
    </location>
</feature>
<feature type="sequence conflict" description="In Ref. 1; AAC31431." evidence="14" ref="1">
    <original>S</original>
    <variation>T</variation>
    <location>
        <position position="3161"/>
    </location>
</feature>
<feature type="sequence conflict" description="In Ref. 2; AAD08658." evidence="14" ref="2">
    <original>LL</original>
    <variation>VV</variation>
    <location>
        <begin position="3385"/>
        <end position="3386"/>
    </location>
</feature>
<feature type="sequence conflict" description="In Ref. 2; AAD08658." evidence="14" ref="2">
    <original>A</original>
    <variation>V</variation>
    <location>
        <position position="3508"/>
    </location>
</feature>
<feature type="sequence conflict" description="In Ref. 5; BAD90404." evidence="14" ref="5">
    <original>E</original>
    <variation>K</variation>
    <location>
        <position position="4069"/>
    </location>
</feature>
<feature type="sequence conflict" description="In Ref. 1; AAC31431." evidence="14" ref="1">
    <original>C</original>
    <variation>S</variation>
    <location>
        <position position="4187"/>
    </location>
</feature>
<feature type="sequence conflict" description="In Ref. 4; BAE36593." evidence="14" ref="4">
    <original>P</original>
    <variation>S</variation>
    <location>
        <position position="4604"/>
    </location>
</feature>
<feature type="sequence conflict" description="In Ref. 1; AAC31431." evidence="14" ref="1">
    <original>T</original>
    <variation>A</variation>
    <location>
        <position position="4716"/>
    </location>
</feature>
<feature type="sequence conflict" description="In Ref. 2; AAD08658." evidence="14" ref="2">
    <original>R</original>
    <variation>C</variation>
    <location>
        <position position="4723"/>
    </location>
</feature>
<feature type="sequence conflict" description="In Ref. 1; AAC31431." evidence="14" ref="1">
    <original>R</original>
    <variation>S</variation>
    <location>
        <position position="4730"/>
    </location>
</feature>
<feature type="sequence conflict" description="In Ref. 1; AAC31431." evidence="14" ref="1">
    <original>N</original>
    <variation>Y</variation>
    <location>
        <position position="4752"/>
    </location>
</feature>
<feature type="sequence conflict" description="In Ref. 1; AAC31431." evidence="14" ref="1">
    <original>C</original>
    <variation>S</variation>
    <location>
        <position position="4790"/>
    </location>
</feature>
<gene>
    <name evidence="16 23" type="primary">Herc2</name>
    <name type="synonym">Jdf2</name>
    <name evidence="19" type="synonym">Kiaa0393</name>
    <name type="synonym">Rjs</name>
</gene>
<organism>
    <name type="scientific">Mus musculus</name>
    <name type="common">Mouse</name>
    <dbReference type="NCBI Taxonomy" id="10090"/>
    <lineage>
        <taxon>Eukaryota</taxon>
        <taxon>Metazoa</taxon>
        <taxon>Chordata</taxon>
        <taxon>Craniata</taxon>
        <taxon>Vertebrata</taxon>
        <taxon>Euteleostomi</taxon>
        <taxon>Mammalia</taxon>
        <taxon>Eutheria</taxon>
        <taxon>Euarchontoglires</taxon>
        <taxon>Glires</taxon>
        <taxon>Rodentia</taxon>
        <taxon>Myomorpha</taxon>
        <taxon>Muroidea</taxon>
        <taxon>Muridae</taxon>
        <taxon>Murinae</taxon>
        <taxon>Mus</taxon>
        <taxon>Mus</taxon>
    </lineage>
</organism>
<comment type="function">
    <text evidence="1">E3 ubiquitin-protein ligase that regulates ubiquitin-dependent retention of repair proteins on damaged chromosomes. Recruited to sites of DNA damage in response to ionizing radiation (IR) and facilitates the assembly of UBE2N and RNF8 promoting DNA damage-induced formation of 'Lys-63'-linked ubiquitin chains. Acts as a mediator of binding specificity between UBE2N and RNF8. Involved in the maintenance of RNF168 levels. E3 ubiquitin-protein ligase that promotes the ubiquitination and proteasomal degradation of XPA which influences the circadian oscillation of DNA excision repair activity. By controlling the steady-state expression of the IGF1R receptor, indirectly regulates the insulin-like growth factor receptor signaling pathway. Also modulates iron metabolism by regulating the basal turnover of FBXL5.</text>
</comment>
<comment type="catalytic activity">
    <reaction evidence="1">
        <text>S-ubiquitinyl-[E2 ubiquitin-conjugating enzyme]-L-cysteine + [acceptor protein]-L-lysine = [E2 ubiquitin-conjugating enzyme]-L-cysteine + N(6)-ubiquitinyl-[acceptor protein]-L-lysine.</text>
        <dbReference type="EC" id="2.3.2.26"/>
    </reaction>
</comment>
<comment type="pathway">
    <text>Protein modification; protein ubiquitination.</text>
</comment>
<comment type="subunit">
    <text evidence="1">Interacts (when phosphorylated at Thr-4829 and sumoylated) with RNF8 (via FHA domain); this interaction increases after ionising radiation (IR) treatment. Interacts with XPA. Interacts with NEURL4. Via its interaction with NEURL4, may indirectly interact with CCP110 and CEP97.</text>
</comment>
<comment type="subcellular location">
    <subcellularLocation>
        <location evidence="1">Cytoplasm</location>
    </subcellularLocation>
    <subcellularLocation>
        <location evidence="1">Cytoplasm</location>
        <location evidence="1">Cytoskeleton</location>
        <location evidence="1">Microtubule organizing center</location>
        <location evidence="1">Centrosome</location>
        <location evidence="1">Centriole</location>
    </subcellularLocation>
    <subcellularLocation>
        <location evidence="1">Nucleus</location>
    </subcellularLocation>
    <text evidence="1">Recruited to sites of DNA damage in response to ionising radiation (IR) via its interaction with RNF8. May loose association with centrosomes during mitosis.</text>
</comment>
<comment type="alternative products">
    <event type="alternative splicing"/>
    <isoform>
        <id>Q4U2R1-1</id>
        <name evidence="11 12">1</name>
        <sequence type="displayed"/>
    </isoform>
    <isoform>
        <id>Q4U2R1-2</id>
        <name evidence="10">2</name>
        <sequence type="described" ref="VSP_051975"/>
    </isoform>
</comment>
<comment type="tissue specificity">
    <text evidence="11">Highest levels are found in brain and testis with lower levels in heart, lung, liver, skeletal muscle and kidney. Little expression detected in spleen.</text>
</comment>
<comment type="domain">
    <text evidence="1">The ZZ-type zinc finger mediates binding to SUMO1, and at low level SUMO2.</text>
</comment>
<comment type="domain">
    <text evidence="1">The RCC1 repeats are grouped into three seven-bladed beta-propeller regions.</text>
</comment>
<comment type="PTM">
    <text>Phosphorylation at Thr-4829 is required for interaction with RNF8.</text>
</comment>
<comment type="PTM">
    <text evidence="1">Sumoylated with SUMO1 by PIAS4 in response to double-strand breaks (DSBs), promoting the interaction with RNF8.</text>
</comment>
<comment type="disease">
    <text evidence="9 11 12">Defects in Herc2 are the cause of the runty, jerky, sterile phenotype (rjs), also known as the juvenile development and fertility phenotype (jfd2), which is characterized by reduced size, jerky gait, fertility problems including spermatocyte and oocyte abnormalities, defective maternal behavior and reduced lifespan with juvenile lethality.</text>
</comment>